<keyword id="KW-0028">Amino-acid biosynthesis</keyword>
<keyword id="KW-0057">Aromatic amino acid biosynthesis</keyword>
<keyword id="KW-0456">Lyase</keyword>
<keyword id="KW-1185">Reference proteome</keyword>
<keyword id="KW-0822">Tryptophan biosynthesis</keyword>
<accession>Q8P7S0</accession>
<evidence type="ECO:0000255" key="1">
    <source>
        <dbReference type="HAMAP-Rule" id="MF_00131"/>
    </source>
</evidence>
<name>TRPA_XANCP</name>
<organism>
    <name type="scientific">Xanthomonas campestris pv. campestris (strain ATCC 33913 / DSM 3586 / NCPPB 528 / LMG 568 / P 25)</name>
    <dbReference type="NCBI Taxonomy" id="190485"/>
    <lineage>
        <taxon>Bacteria</taxon>
        <taxon>Pseudomonadati</taxon>
        <taxon>Pseudomonadota</taxon>
        <taxon>Gammaproteobacteria</taxon>
        <taxon>Lysobacterales</taxon>
        <taxon>Lysobacteraceae</taxon>
        <taxon>Xanthomonas</taxon>
    </lineage>
</organism>
<dbReference type="EC" id="4.2.1.20" evidence="1"/>
<dbReference type="EMBL" id="AE008922">
    <property type="protein sequence ID" value="AAM41813.1"/>
    <property type="molecule type" value="Genomic_DNA"/>
</dbReference>
<dbReference type="RefSeq" id="NP_637889.1">
    <property type="nucleotide sequence ID" value="NC_003902.1"/>
</dbReference>
<dbReference type="RefSeq" id="WP_011037671.1">
    <property type="nucleotide sequence ID" value="NC_003902.1"/>
</dbReference>
<dbReference type="SMR" id="Q8P7S0"/>
<dbReference type="STRING" id="190485.XCC2541"/>
<dbReference type="EnsemblBacteria" id="AAM41813">
    <property type="protein sequence ID" value="AAM41813"/>
    <property type="gene ID" value="XCC2541"/>
</dbReference>
<dbReference type="KEGG" id="xcc:XCC2541"/>
<dbReference type="PATRIC" id="fig|190485.4.peg.2707"/>
<dbReference type="eggNOG" id="COG0159">
    <property type="taxonomic scope" value="Bacteria"/>
</dbReference>
<dbReference type="HOGENOM" id="CLU_016734_0_4_6"/>
<dbReference type="OrthoDB" id="9804578at2"/>
<dbReference type="UniPathway" id="UPA00035">
    <property type="reaction ID" value="UER00044"/>
</dbReference>
<dbReference type="Proteomes" id="UP000001010">
    <property type="component" value="Chromosome"/>
</dbReference>
<dbReference type="GO" id="GO:0005829">
    <property type="term" value="C:cytosol"/>
    <property type="evidence" value="ECO:0000318"/>
    <property type="project" value="GO_Central"/>
</dbReference>
<dbReference type="GO" id="GO:0004834">
    <property type="term" value="F:tryptophan synthase activity"/>
    <property type="evidence" value="ECO:0000318"/>
    <property type="project" value="GO_Central"/>
</dbReference>
<dbReference type="GO" id="GO:0000162">
    <property type="term" value="P:L-tryptophan biosynthetic process"/>
    <property type="evidence" value="ECO:0000318"/>
    <property type="project" value="GO_Central"/>
</dbReference>
<dbReference type="CDD" id="cd04724">
    <property type="entry name" value="Tryptophan_synthase_alpha"/>
    <property type="match status" value="1"/>
</dbReference>
<dbReference type="FunFam" id="3.20.20.70:FF:000037">
    <property type="entry name" value="Tryptophan synthase alpha chain"/>
    <property type="match status" value="1"/>
</dbReference>
<dbReference type="Gene3D" id="3.20.20.70">
    <property type="entry name" value="Aldolase class I"/>
    <property type="match status" value="1"/>
</dbReference>
<dbReference type="HAMAP" id="MF_00131">
    <property type="entry name" value="Trp_synth_alpha"/>
    <property type="match status" value="1"/>
</dbReference>
<dbReference type="InterPro" id="IPR013785">
    <property type="entry name" value="Aldolase_TIM"/>
</dbReference>
<dbReference type="InterPro" id="IPR011060">
    <property type="entry name" value="RibuloseP-bd_barrel"/>
</dbReference>
<dbReference type="InterPro" id="IPR018204">
    <property type="entry name" value="Trp_synthase_alpha_AS"/>
</dbReference>
<dbReference type="InterPro" id="IPR002028">
    <property type="entry name" value="Trp_synthase_suA"/>
</dbReference>
<dbReference type="NCBIfam" id="TIGR00262">
    <property type="entry name" value="trpA"/>
    <property type="match status" value="1"/>
</dbReference>
<dbReference type="PANTHER" id="PTHR43406:SF1">
    <property type="entry name" value="TRYPTOPHAN SYNTHASE ALPHA CHAIN, CHLOROPLASTIC"/>
    <property type="match status" value="1"/>
</dbReference>
<dbReference type="PANTHER" id="PTHR43406">
    <property type="entry name" value="TRYPTOPHAN SYNTHASE, ALPHA CHAIN"/>
    <property type="match status" value="1"/>
</dbReference>
<dbReference type="Pfam" id="PF00290">
    <property type="entry name" value="Trp_syntA"/>
    <property type="match status" value="1"/>
</dbReference>
<dbReference type="SUPFAM" id="SSF51366">
    <property type="entry name" value="Ribulose-phoshate binding barrel"/>
    <property type="match status" value="1"/>
</dbReference>
<dbReference type="PROSITE" id="PS00167">
    <property type="entry name" value="TRP_SYNTHASE_ALPHA"/>
    <property type="match status" value="1"/>
</dbReference>
<reference key="1">
    <citation type="journal article" date="2002" name="Nature">
        <title>Comparison of the genomes of two Xanthomonas pathogens with differing host specificities.</title>
        <authorList>
            <person name="da Silva A.C.R."/>
            <person name="Ferro J.A."/>
            <person name="Reinach F.C."/>
            <person name="Farah C.S."/>
            <person name="Furlan L.R."/>
            <person name="Quaggio R.B."/>
            <person name="Monteiro-Vitorello C.B."/>
            <person name="Van Sluys M.A."/>
            <person name="Almeida N.F. Jr."/>
            <person name="Alves L.M.C."/>
            <person name="do Amaral A.M."/>
            <person name="Bertolini M.C."/>
            <person name="Camargo L.E.A."/>
            <person name="Camarotte G."/>
            <person name="Cannavan F."/>
            <person name="Cardozo J."/>
            <person name="Chambergo F."/>
            <person name="Ciapina L.P."/>
            <person name="Cicarelli R.M.B."/>
            <person name="Coutinho L.L."/>
            <person name="Cursino-Santos J.R."/>
            <person name="El-Dorry H."/>
            <person name="Faria J.B."/>
            <person name="Ferreira A.J.S."/>
            <person name="Ferreira R.C.C."/>
            <person name="Ferro M.I.T."/>
            <person name="Formighieri E.F."/>
            <person name="Franco M.C."/>
            <person name="Greggio C.C."/>
            <person name="Gruber A."/>
            <person name="Katsuyama A.M."/>
            <person name="Kishi L.T."/>
            <person name="Leite R.P."/>
            <person name="Lemos E.G.M."/>
            <person name="Lemos M.V.F."/>
            <person name="Locali E.C."/>
            <person name="Machado M.A."/>
            <person name="Madeira A.M.B.N."/>
            <person name="Martinez-Rossi N.M."/>
            <person name="Martins E.C."/>
            <person name="Meidanis J."/>
            <person name="Menck C.F.M."/>
            <person name="Miyaki C.Y."/>
            <person name="Moon D.H."/>
            <person name="Moreira L.M."/>
            <person name="Novo M.T.M."/>
            <person name="Okura V.K."/>
            <person name="Oliveira M.C."/>
            <person name="Oliveira V.R."/>
            <person name="Pereira H.A."/>
            <person name="Rossi A."/>
            <person name="Sena J.A.D."/>
            <person name="Silva C."/>
            <person name="de Souza R.F."/>
            <person name="Spinola L.A.F."/>
            <person name="Takita M.A."/>
            <person name="Tamura R.E."/>
            <person name="Teixeira E.C."/>
            <person name="Tezza R.I.D."/>
            <person name="Trindade dos Santos M."/>
            <person name="Truffi D."/>
            <person name="Tsai S.M."/>
            <person name="White F.F."/>
            <person name="Setubal J.C."/>
            <person name="Kitajima J.P."/>
        </authorList>
    </citation>
    <scope>NUCLEOTIDE SEQUENCE [LARGE SCALE GENOMIC DNA]</scope>
    <source>
        <strain>ATCC 33913 / DSM 3586 / NCPPB 528 / LMG 568 / P 25</strain>
    </source>
</reference>
<proteinExistence type="inferred from homology"/>
<comment type="function">
    <text evidence="1">The alpha subunit is responsible for the aldol cleavage of indoleglycerol phosphate to indole and glyceraldehyde 3-phosphate.</text>
</comment>
<comment type="catalytic activity">
    <reaction evidence="1">
        <text>(1S,2R)-1-C-(indol-3-yl)glycerol 3-phosphate + L-serine = D-glyceraldehyde 3-phosphate + L-tryptophan + H2O</text>
        <dbReference type="Rhea" id="RHEA:10532"/>
        <dbReference type="ChEBI" id="CHEBI:15377"/>
        <dbReference type="ChEBI" id="CHEBI:33384"/>
        <dbReference type="ChEBI" id="CHEBI:57912"/>
        <dbReference type="ChEBI" id="CHEBI:58866"/>
        <dbReference type="ChEBI" id="CHEBI:59776"/>
        <dbReference type="EC" id="4.2.1.20"/>
    </reaction>
</comment>
<comment type="pathway">
    <text evidence="1">Amino-acid biosynthesis; L-tryptophan biosynthesis; L-tryptophan from chorismate: step 5/5.</text>
</comment>
<comment type="subunit">
    <text evidence="1">Tetramer of two alpha and two beta chains.</text>
</comment>
<comment type="similarity">
    <text evidence="1">Belongs to the TrpA family.</text>
</comment>
<feature type="chain" id="PRO_0000098876" description="Tryptophan synthase alpha chain">
    <location>
        <begin position="1"/>
        <end position="272"/>
    </location>
</feature>
<feature type="active site" description="Proton acceptor" evidence="1">
    <location>
        <position position="53"/>
    </location>
</feature>
<feature type="active site" description="Proton acceptor" evidence="1">
    <location>
        <position position="64"/>
    </location>
</feature>
<gene>
    <name evidence="1" type="primary">trpA</name>
    <name type="ordered locus">XCC2541</name>
</gene>
<sequence>MSRAPDRIAACFDALRHSGRKALIPFITAGDPSLEATVPVMHALVRAGANIIELGVPFSDPMADGPTIQRSSERALGRGAGLAYVIEAVQEFRREDATTPVVLMGYLNPIEIHGTRRFAETAVAAGIDGVLLVDLPPEEADETRAIFTEVGLALIALASPTTGEARLDMLCSTAQGYLYYVSFSGVTGAADRLDTHAASDRLRQLRARAGAPVVAGFGIKDAASAAAMAVDADGVVVGSALVAALADASDVRSARKRAEDFLQPLRQALDAG</sequence>
<protein>
    <recommendedName>
        <fullName evidence="1">Tryptophan synthase alpha chain</fullName>
        <ecNumber evidence="1">4.2.1.20</ecNumber>
    </recommendedName>
</protein>